<proteinExistence type="inferred from homology"/>
<organism>
    <name type="scientific">Haemophilus influenzae (strain PittEE)</name>
    <dbReference type="NCBI Taxonomy" id="374930"/>
    <lineage>
        <taxon>Bacteria</taxon>
        <taxon>Pseudomonadati</taxon>
        <taxon>Pseudomonadota</taxon>
        <taxon>Gammaproteobacteria</taxon>
        <taxon>Pasteurellales</taxon>
        <taxon>Pasteurellaceae</taxon>
        <taxon>Haemophilus</taxon>
    </lineage>
</organism>
<reference key="1">
    <citation type="journal article" date="2007" name="Genome Biol.">
        <title>Characterization and modeling of the Haemophilus influenzae core and supragenomes based on the complete genomic sequences of Rd and 12 clinical nontypeable strains.</title>
        <authorList>
            <person name="Hogg J.S."/>
            <person name="Hu F.Z."/>
            <person name="Janto B."/>
            <person name="Boissy R."/>
            <person name="Hayes J."/>
            <person name="Keefe R."/>
            <person name="Post J.C."/>
            <person name="Ehrlich G.D."/>
        </authorList>
    </citation>
    <scope>NUCLEOTIDE SEQUENCE [LARGE SCALE GENOMIC DNA]</scope>
    <source>
        <strain>PittEE</strain>
    </source>
</reference>
<name>PLSY_HAEIE</name>
<comment type="function">
    <text evidence="1">Catalyzes the transfer of an acyl group from acyl-phosphate (acyl-PO(4)) to glycerol-3-phosphate (G3P) to form lysophosphatidic acid (LPA). This enzyme utilizes acyl-phosphate as fatty acyl donor, but not acyl-CoA or acyl-ACP.</text>
</comment>
<comment type="catalytic activity">
    <reaction evidence="1">
        <text>an acyl phosphate + sn-glycerol 3-phosphate = a 1-acyl-sn-glycero-3-phosphate + phosphate</text>
        <dbReference type="Rhea" id="RHEA:34075"/>
        <dbReference type="ChEBI" id="CHEBI:43474"/>
        <dbReference type="ChEBI" id="CHEBI:57597"/>
        <dbReference type="ChEBI" id="CHEBI:57970"/>
        <dbReference type="ChEBI" id="CHEBI:59918"/>
        <dbReference type="EC" id="2.3.1.275"/>
    </reaction>
</comment>
<comment type="pathway">
    <text evidence="1">Lipid metabolism; phospholipid metabolism.</text>
</comment>
<comment type="subunit">
    <text evidence="1">Probably interacts with PlsX.</text>
</comment>
<comment type="subcellular location">
    <subcellularLocation>
        <location evidence="1">Cell inner membrane</location>
        <topology evidence="1">Multi-pass membrane protein</topology>
    </subcellularLocation>
</comment>
<comment type="similarity">
    <text evidence="1">Belongs to the PlsY family.</text>
</comment>
<sequence>MSLFALFYMLFAYLLGSVSSAILICRIAGLPDPRQNGSHNPGATNVLRIGNRKSALAVLIFDMLKGMIPVWAGYYLGLTQFELGMVALGACLGHIFPIFFQFKGGKGVATAFGAIAPISWAVAGSMFGTWIFVFLVSGYSSLSAVISALLVPFYVWWFKPEFTFPVALVCCLLIYRHHDNIQRLWRGQEDKVWAKFKKK</sequence>
<keyword id="KW-0997">Cell inner membrane</keyword>
<keyword id="KW-1003">Cell membrane</keyword>
<keyword id="KW-0444">Lipid biosynthesis</keyword>
<keyword id="KW-0443">Lipid metabolism</keyword>
<keyword id="KW-0472">Membrane</keyword>
<keyword id="KW-0594">Phospholipid biosynthesis</keyword>
<keyword id="KW-1208">Phospholipid metabolism</keyword>
<keyword id="KW-0808">Transferase</keyword>
<keyword id="KW-0812">Transmembrane</keyword>
<keyword id="KW-1133">Transmembrane helix</keyword>
<feature type="chain" id="PRO_1000064181" description="Glycerol-3-phosphate acyltransferase">
    <location>
        <begin position="1"/>
        <end position="199"/>
    </location>
</feature>
<feature type="transmembrane region" description="Helical" evidence="1">
    <location>
        <begin position="4"/>
        <end position="24"/>
    </location>
</feature>
<feature type="transmembrane region" description="Helical" evidence="1">
    <location>
        <begin position="56"/>
        <end position="76"/>
    </location>
</feature>
<feature type="transmembrane region" description="Helical" evidence="1">
    <location>
        <begin position="80"/>
        <end position="100"/>
    </location>
</feature>
<feature type="transmembrane region" description="Helical" evidence="1">
    <location>
        <begin position="115"/>
        <end position="135"/>
    </location>
</feature>
<feature type="transmembrane region" description="Helical" evidence="1">
    <location>
        <begin position="154"/>
        <end position="176"/>
    </location>
</feature>
<gene>
    <name evidence="1" type="primary">plsY</name>
    <name type="ordered locus">CGSHiEE_01725</name>
</gene>
<dbReference type="EC" id="2.3.1.275" evidence="1"/>
<dbReference type="EMBL" id="CP000671">
    <property type="protein sequence ID" value="ABQ97825.1"/>
    <property type="molecule type" value="Genomic_DNA"/>
</dbReference>
<dbReference type="SMR" id="A5UAM4"/>
<dbReference type="KEGG" id="hip:CGSHiEE_01725"/>
<dbReference type="HOGENOM" id="CLU_081254_0_2_6"/>
<dbReference type="UniPathway" id="UPA00085"/>
<dbReference type="GO" id="GO:0005886">
    <property type="term" value="C:plasma membrane"/>
    <property type="evidence" value="ECO:0007669"/>
    <property type="project" value="UniProtKB-SubCell"/>
</dbReference>
<dbReference type="GO" id="GO:0043772">
    <property type="term" value="F:acyl-phosphate glycerol-3-phosphate acyltransferase activity"/>
    <property type="evidence" value="ECO:0007669"/>
    <property type="project" value="UniProtKB-UniRule"/>
</dbReference>
<dbReference type="GO" id="GO:0008654">
    <property type="term" value="P:phospholipid biosynthetic process"/>
    <property type="evidence" value="ECO:0007669"/>
    <property type="project" value="UniProtKB-UniRule"/>
</dbReference>
<dbReference type="HAMAP" id="MF_01043">
    <property type="entry name" value="PlsY"/>
    <property type="match status" value="1"/>
</dbReference>
<dbReference type="InterPro" id="IPR003811">
    <property type="entry name" value="G3P_acylTferase_PlsY"/>
</dbReference>
<dbReference type="NCBIfam" id="TIGR00023">
    <property type="entry name" value="glycerol-3-phosphate 1-O-acyltransferase PlsY"/>
    <property type="match status" value="1"/>
</dbReference>
<dbReference type="PANTHER" id="PTHR30309:SF0">
    <property type="entry name" value="GLYCEROL-3-PHOSPHATE ACYLTRANSFERASE-RELATED"/>
    <property type="match status" value="1"/>
</dbReference>
<dbReference type="PANTHER" id="PTHR30309">
    <property type="entry name" value="INNER MEMBRANE PROTEIN YGIH"/>
    <property type="match status" value="1"/>
</dbReference>
<dbReference type="Pfam" id="PF02660">
    <property type="entry name" value="G3P_acyltransf"/>
    <property type="match status" value="1"/>
</dbReference>
<dbReference type="SMART" id="SM01207">
    <property type="entry name" value="G3P_acyltransf"/>
    <property type="match status" value="1"/>
</dbReference>
<protein>
    <recommendedName>
        <fullName evidence="1">Glycerol-3-phosphate acyltransferase</fullName>
    </recommendedName>
    <alternativeName>
        <fullName evidence="1">Acyl-PO4 G3P acyltransferase</fullName>
    </alternativeName>
    <alternativeName>
        <fullName evidence="1">Acyl-phosphate--glycerol-3-phosphate acyltransferase</fullName>
    </alternativeName>
    <alternativeName>
        <fullName evidence="1">G3P acyltransferase</fullName>
        <shortName evidence="1">GPAT</shortName>
        <ecNumber evidence="1">2.3.1.275</ecNumber>
    </alternativeName>
    <alternativeName>
        <fullName evidence="1">Lysophosphatidic acid synthase</fullName>
        <shortName evidence="1">LPA synthase</shortName>
    </alternativeName>
</protein>
<evidence type="ECO:0000255" key="1">
    <source>
        <dbReference type="HAMAP-Rule" id="MF_01043"/>
    </source>
</evidence>
<accession>A5UAM4</accession>